<dbReference type="EC" id="4.6.1.12" evidence="1"/>
<dbReference type="EMBL" id="CP001099">
    <property type="protein sequence ID" value="ACF11926.1"/>
    <property type="molecule type" value="Genomic_DNA"/>
</dbReference>
<dbReference type="RefSeq" id="WP_012502759.1">
    <property type="nucleotide sequence ID" value="NC_011027.1"/>
</dbReference>
<dbReference type="SMR" id="B3QPS3"/>
<dbReference type="STRING" id="517417.Cpar_1528"/>
<dbReference type="KEGG" id="cpc:Cpar_1528"/>
<dbReference type="eggNOG" id="COG0245">
    <property type="taxonomic scope" value="Bacteria"/>
</dbReference>
<dbReference type="HOGENOM" id="CLU_084630_2_0_10"/>
<dbReference type="OrthoDB" id="9804336at2"/>
<dbReference type="UniPathway" id="UPA00056">
    <property type="reaction ID" value="UER00095"/>
</dbReference>
<dbReference type="Proteomes" id="UP000008811">
    <property type="component" value="Chromosome"/>
</dbReference>
<dbReference type="GO" id="GO:0008685">
    <property type="term" value="F:2-C-methyl-D-erythritol 2,4-cyclodiphosphate synthase activity"/>
    <property type="evidence" value="ECO:0007669"/>
    <property type="project" value="UniProtKB-UniRule"/>
</dbReference>
<dbReference type="GO" id="GO:0046872">
    <property type="term" value="F:metal ion binding"/>
    <property type="evidence" value="ECO:0007669"/>
    <property type="project" value="UniProtKB-KW"/>
</dbReference>
<dbReference type="GO" id="GO:0019288">
    <property type="term" value="P:isopentenyl diphosphate biosynthetic process, methylerythritol 4-phosphate pathway"/>
    <property type="evidence" value="ECO:0007669"/>
    <property type="project" value="UniProtKB-UniRule"/>
</dbReference>
<dbReference type="GO" id="GO:0016114">
    <property type="term" value="P:terpenoid biosynthetic process"/>
    <property type="evidence" value="ECO:0007669"/>
    <property type="project" value="InterPro"/>
</dbReference>
<dbReference type="CDD" id="cd00554">
    <property type="entry name" value="MECDP_synthase"/>
    <property type="match status" value="1"/>
</dbReference>
<dbReference type="FunFam" id="3.30.1330.50:FF:000001">
    <property type="entry name" value="2-C-methyl-D-erythritol 2,4-cyclodiphosphate synthase"/>
    <property type="match status" value="1"/>
</dbReference>
<dbReference type="Gene3D" id="3.30.1330.50">
    <property type="entry name" value="2-C-methyl-D-erythritol 2,4-cyclodiphosphate synthase"/>
    <property type="match status" value="1"/>
</dbReference>
<dbReference type="HAMAP" id="MF_00107">
    <property type="entry name" value="IspF"/>
    <property type="match status" value="1"/>
</dbReference>
<dbReference type="InterPro" id="IPR003526">
    <property type="entry name" value="MECDP_synthase"/>
</dbReference>
<dbReference type="InterPro" id="IPR020555">
    <property type="entry name" value="MECDP_synthase_CS"/>
</dbReference>
<dbReference type="InterPro" id="IPR036571">
    <property type="entry name" value="MECDP_synthase_sf"/>
</dbReference>
<dbReference type="NCBIfam" id="TIGR00151">
    <property type="entry name" value="ispF"/>
    <property type="match status" value="1"/>
</dbReference>
<dbReference type="PANTHER" id="PTHR43181">
    <property type="entry name" value="2-C-METHYL-D-ERYTHRITOL 2,4-CYCLODIPHOSPHATE SYNTHASE, CHLOROPLASTIC"/>
    <property type="match status" value="1"/>
</dbReference>
<dbReference type="PANTHER" id="PTHR43181:SF1">
    <property type="entry name" value="2-C-METHYL-D-ERYTHRITOL 2,4-CYCLODIPHOSPHATE SYNTHASE, CHLOROPLASTIC"/>
    <property type="match status" value="1"/>
</dbReference>
<dbReference type="Pfam" id="PF02542">
    <property type="entry name" value="YgbB"/>
    <property type="match status" value="1"/>
</dbReference>
<dbReference type="SUPFAM" id="SSF69765">
    <property type="entry name" value="IpsF-like"/>
    <property type="match status" value="1"/>
</dbReference>
<dbReference type="PROSITE" id="PS01350">
    <property type="entry name" value="ISPF"/>
    <property type="match status" value="1"/>
</dbReference>
<organism>
    <name type="scientific">Chlorobaculum parvum (strain DSM 263 / NCIMB 8327)</name>
    <name type="common">Chlorobium vibrioforme subsp. thiosulfatophilum</name>
    <dbReference type="NCBI Taxonomy" id="517417"/>
    <lineage>
        <taxon>Bacteria</taxon>
        <taxon>Pseudomonadati</taxon>
        <taxon>Chlorobiota</taxon>
        <taxon>Chlorobiia</taxon>
        <taxon>Chlorobiales</taxon>
        <taxon>Chlorobiaceae</taxon>
        <taxon>Chlorobaculum</taxon>
    </lineage>
</organism>
<sequence length="157" mass="17050">MRIGIGIDVHQFSEDRKLIVGGVEVPSPVGLLGHSDADVLLHAISDALLGAAALGDIGKHFPDTSPDYKDADSMELLKHVGKLLEQEGYKPVNIDTMLLLEKPKIAPYIEQMRRNIASCLDMDMNDVSVKATTNEKLGYVGRQEGACAHAVCLIEKK</sequence>
<accession>B3QPS3</accession>
<protein>
    <recommendedName>
        <fullName evidence="1">2-C-methyl-D-erythritol 2,4-cyclodiphosphate synthase</fullName>
        <shortName evidence="1">MECDP-synthase</shortName>
        <shortName evidence="1">MECPP-synthase</shortName>
        <shortName evidence="1">MECPS</shortName>
        <ecNumber evidence="1">4.6.1.12</ecNumber>
    </recommendedName>
</protein>
<feature type="chain" id="PRO_1000094247" description="2-C-methyl-D-erythritol 2,4-cyclodiphosphate synthase">
    <location>
        <begin position="1"/>
        <end position="157"/>
    </location>
</feature>
<feature type="binding site" evidence="1">
    <location>
        <begin position="8"/>
        <end position="10"/>
    </location>
    <ligand>
        <name>4-CDP-2-C-methyl-D-erythritol 2-phosphate</name>
        <dbReference type="ChEBI" id="CHEBI:57919"/>
    </ligand>
</feature>
<feature type="binding site" evidence="1">
    <location>
        <position position="8"/>
    </location>
    <ligand>
        <name>a divalent metal cation</name>
        <dbReference type="ChEBI" id="CHEBI:60240"/>
    </ligand>
</feature>
<feature type="binding site" evidence="1">
    <location>
        <position position="10"/>
    </location>
    <ligand>
        <name>a divalent metal cation</name>
        <dbReference type="ChEBI" id="CHEBI:60240"/>
    </ligand>
</feature>
<feature type="binding site" evidence="1">
    <location>
        <begin position="34"/>
        <end position="35"/>
    </location>
    <ligand>
        <name>4-CDP-2-C-methyl-D-erythritol 2-phosphate</name>
        <dbReference type="ChEBI" id="CHEBI:57919"/>
    </ligand>
</feature>
<feature type="binding site" evidence="1">
    <location>
        <position position="42"/>
    </location>
    <ligand>
        <name>a divalent metal cation</name>
        <dbReference type="ChEBI" id="CHEBI:60240"/>
    </ligand>
</feature>
<feature type="binding site" evidence="1">
    <location>
        <begin position="56"/>
        <end position="58"/>
    </location>
    <ligand>
        <name>4-CDP-2-C-methyl-D-erythritol 2-phosphate</name>
        <dbReference type="ChEBI" id="CHEBI:57919"/>
    </ligand>
</feature>
<feature type="binding site" evidence="1">
    <location>
        <begin position="132"/>
        <end position="135"/>
    </location>
    <ligand>
        <name>4-CDP-2-C-methyl-D-erythritol 2-phosphate</name>
        <dbReference type="ChEBI" id="CHEBI:57919"/>
    </ligand>
</feature>
<feature type="binding site" evidence="1">
    <location>
        <position position="142"/>
    </location>
    <ligand>
        <name>4-CDP-2-C-methyl-D-erythritol 2-phosphate</name>
        <dbReference type="ChEBI" id="CHEBI:57919"/>
    </ligand>
</feature>
<feature type="site" description="Transition state stabilizer" evidence="1">
    <location>
        <position position="34"/>
    </location>
</feature>
<feature type="site" description="Transition state stabilizer" evidence="1">
    <location>
        <position position="133"/>
    </location>
</feature>
<gene>
    <name evidence="1" type="primary">ispF</name>
    <name type="ordered locus">Cpar_1528</name>
</gene>
<proteinExistence type="inferred from homology"/>
<keyword id="KW-0414">Isoprene biosynthesis</keyword>
<keyword id="KW-0456">Lyase</keyword>
<keyword id="KW-0479">Metal-binding</keyword>
<name>ISPF_CHLP8</name>
<reference key="1">
    <citation type="submission" date="2008-06" db="EMBL/GenBank/DDBJ databases">
        <title>Complete sequence of Chlorobaculum parvum NCIB 8327.</title>
        <authorList>
            <consortium name="US DOE Joint Genome Institute"/>
            <person name="Lucas S."/>
            <person name="Copeland A."/>
            <person name="Lapidus A."/>
            <person name="Glavina del Rio T."/>
            <person name="Dalin E."/>
            <person name="Tice H."/>
            <person name="Bruce D."/>
            <person name="Goodwin L."/>
            <person name="Pitluck S."/>
            <person name="Schmutz J."/>
            <person name="Larimer F."/>
            <person name="Land M."/>
            <person name="Hauser L."/>
            <person name="Kyrpides N."/>
            <person name="Mikhailova N."/>
            <person name="Zhao F."/>
            <person name="Li T."/>
            <person name="Liu Z."/>
            <person name="Overmann J."/>
            <person name="Bryant D.A."/>
            <person name="Richardson P."/>
        </authorList>
    </citation>
    <scope>NUCLEOTIDE SEQUENCE [LARGE SCALE GENOMIC DNA]</scope>
    <source>
        <strain>DSM 263 / NCIMB 8327</strain>
    </source>
</reference>
<evidence type="ECO:0000255" key="1">
    <source>
        <dbReference type="HAMAP-Rule" id="MF_00107"/>
    </source>
</evidence>
<comment type="function">
    <text evidence="1">Involved in the biosynthesis of isopentenyl diphosphate (IPP) and dimethylallyl diphosphate (DMAPP), two major building blocks of isoprenoid compounds. Catalyzes the conversion of 4-diphosphocytidyl-2-C-methyl-D-erythritol 2-phosphate (CDP-ME2P) to 2-C-methyl-D-erythritol 2,4-cyclodiphosphate (ME-CPP) with a corresponding release of cytidine 5-monophosphate (CMP).</text>
</comment>
<comment type="catalytic activity">
    <reaction evidence="1">
        <text>4-CDP-2-C-methyl-D-erythritol 2-phosphate = 2-C-methyl-D-erythritol 2,4-cyclic diphosphate + CMP</text>
        <dbReference type="Rhea" id="RHEA:23864"/>
        <dbReference type="ChEBI" id="CHEBI:57919"/>
        <dbReference type="ChEBI" id="CHEBI:58483"/>
        <dbReference type="ChEBI" id="CHEBI:60377"/>
        <dbReference type="EC" id="4.6.1.12"/>
    </reaction>
</comment>
<comment type="cofactor">
    <cofactor evidence="1">
        <name>a divalent metal cation</name>
        <dbReference type="ChEBI" id="CHEBI:60240"/>
    </cofactor>
    <text evidence="1">Binds 1 divalent metal cation per subunit.</text>
</comment>
<comment type="pathway">
    <text evidence="1">Isoprenoid biosynthesis; isopentenyl diphosphate biosynthesis via DXP pathway; isopentenyl diphosphate from 1-deoxy-D-xylulose 5-phosphate: step 4/6.</text>
</comment>
<comment type="subunit">
    <text evidence="1">Homotrimer.</text>
</comment>
<comment type="similarity">
    <text evidence="1">Belongs to the IspF family.</text>
</comment>